<feature type="chain" id="PRO_0000115384" description="Small ribosomal subunit protein uS15">
    <location>
        <begin position="1"/>
        <end position="89"/>
    </location>
</feature>
<reference key="1">
    <citation type="journal article" date="2005" name="Science">
        <title>Extensive DNA inversions in the B. fragilis genome control variable gene expression.</title>
        <authorList>
            <person name="Cerdeno-Tarraga A.-M."/>
            <person name="Patrick S."/>
            <person name="Crossman L.C."/>
            <person name="Blakely G."/>
            <person name="Abratt V."/>
            <person name="Lennard N."/>
            <person name="Poxton I."/>
            <person name="Duerden B."/>
            <person name="Harris B."/>
            <person name="Quail M.A."/>
            <person name="Barron A."/>
            <person name="Clark L."/>
            <person name="Corton C."/>
            <person name="Doggett J."/>
            <person name="Holden M.T.G."/>
            <person name="Larke N."/>
            <person name="Line A."/>
            <person name="Lord A."/>
            <person name="Norbertczak H."/>
            <person name="Ormond D."/>
            <person name="Price C."/>
            <person name="Rabbinowitsch E."/>
            <person name="Woodward J."/>
            <person name="Barrell B.G."/>
            <person name="Parkhill J."/>
        </authorList>
    </citation>
    <scope>NUCLEOTIDE SEQUENCE [LARGE SCALE GENOMIC DNA]</scope>
    <source>
        <strain>ATCC 25285 / DSM 2151 / CCUG 4856 / JCM 11019 / LMG 10263 / NCTC 9343 / Onslow / VPI 2553 / EN-2</strain>
    </source>
</reference>
<accession>Q5L7M0</accession>
<evidence type="ECO:0000255" key="1">
    <source>
        <dbReference type="HAMAP-Rule" id="MF_01343"/>
    </source>
</evidence>
<evidence type="ECO:0000305" key="2"/>
<keyword id="KW-0687">Ribonucleoprotein</keyword>
<keyword id="KW-0689">Ribosomal protein</keyword>
<keyword id="KW-0694">RNA-binding</keyword>
<keyword id="KW-0699">rRNA-binding</keyword>
<proteinExistence type="inferred from homology"/>
<comment type="function">
    <text evidence="1">One of the primary rRNA binding proteins, it binds directly to 16S rRNA where it helps nucleate assembly of the platform of the 30S subunit by binding and bridging several RNA helices of the 16S rRNA.</text>
</comment>
<comment type="function">
    <text evidence="1">Forms an intersubunit bridge (bridge B4) with the 23S rRNA of the 50S subunit in the ribosome.</text>
</comment>
<comment type="subunit">
    <text evidence="1">Part of the 30S ribosomal subunit. Forms a bridge to the 50S subunit in the 70S ribosome, contacting the 23S rRNA.</text>
</comment>
<comment type="similarity">
    <text evidence="1">Belongs to the universal ribosomal protein uS15 family.</text>
</comment>
<protein>
    <recommendedName>
        <fullName evidence="1">Small ribosomal subunit protein uS15</fullName>
    </recommendedName>
    <alternativeName>
        <fullName evidence="2">30S ribosomal protein S15</fullName>
    </alternativeName>
</protein>
<organism>
    <name type="scientific">Bacteroides fragilis (strain ATCC 25285 / DSM 2151 / CCUG 4856 / JCM 11019 / LMG 10263 / NCTC 9343 / Onslow / VPI 2553 / EN-2)</name>
    <dbReference type="NCBI Taxonomy" id="272559"/>
    <lineage>
        <taxon>Bacteria</taxon>
        <taxon>Pseudomonadati</taxon>
        <taxon>Bacteroidota</taxon>
        <taxon>Bacteroidia</taxon>
        <taxon>Bacteroidales</taxon>
        <taxon>Bacteroidaceae</taxon>
        <taxon>Bacteroides</taxon>
    </lineage>
</organism>
<name>RS15_BACFN</name>
<gene>
    <name evidence="1" type="primary">rpsO</name>
    <name type="ordered locus">BF4259</name>
</gene>
<sequence length="89" mass="10402">MYLDAAKKQEIFSKYGKSNTDTGSAEAQIALFSYRITHLTEHMKLNRKDYSTERALTMLVGKRRALLDYLKAKDITRYRDIIKELGLRK</sequence>
<dbReference type="EMBL" id="CR626927">
    <property type="protein sequence ID" value="CAH09930.1"/>
    <property type="molecule type" value="Genomic_DNA"/>
</dbReference>
<dbReference type="RefSeq" id="WP_005791955.1">
    <property type="nucleotide sequence ID" value="NZ_UFTH01000001.1"/>
</dbReference>
<dbReference type="SMR" id="Q5L7M0"/>
<dbReference type="PaxDb" id="272559-BF9343_4149"/>
<dbReference type="GeneID" id="60366684"/>
<dbReference type="KEGG" id="bfs:BF9343_4149"/>
<dbReference type="eggNOG" id="COG0184">
    <property type="taxonomic scope" value="Bacteria"/>
</dbReference>
<dbReference type="HOGENOM" id="CLU_148518_0_1_10"/>
<dbReference type="Proteomes" id="UP000006731">
    <property type="component" value="Chromosome"/>
</dbReference>
<dbReference type="GO" id="GO:0022627">
    <property type="term" value="C:cytosolic small ribosomal subunit"/>
    <property type="evidence" value="ECO:0007669"/>
    <property type="project" value="TreeGrafter"/>
</dbReference>
<dbReference type="GO" id="GO:0019843">
    <property type="term" value="F:rRNA binding"/>
    <property type="evidence" value="ECO:0007669"/>
    <property type="project" value="UniProtKB-UniRule"/>
</dbReference>
<dbReference type="GO" id="GO:0003735">
    <property type="term" value="F:structural constituent of ribosome"/>
    <property type="evidence" value="ECO:0007669"/>
    <property type="project" value="InterPro"/>
</dbReference>
<dbReference type="GO" id="GO:0006412">
    <property type="term" value="P:translation"/>
    <property type="evidence" value="ECO:0007669"/>
    <property type="project" value="UniProtKB-UniRule"/>
</dbReference>
<dbReference type="CDD" id="cd00353">
    <property type="entry name" value="Ribosomal_S15p_S13e"/>
    <property type="match status" value="1"/>
</dbReference>
<dbReference type="FunFam" id="1.10.287.10:FF:000002">
    <property type="entry name" value="30S ribosomal protein S15"/>
    <property type="match status" value="1"/>
</dbReference>
<dbReference type="Gene3D" id="6.10.250.3130">
    <property type="match status" value="1"/>
</dbReference>
<dbReference type="Gene3D" id="1.10.287.10">
    <property type="entry name" value="S15/NS1, RNA-binding"/>
    <property type="match status" value="1"/>
</dbReference>
<dbReference type="HAMAP" id="MF_01343_B">
    <property type="entry name" value="Ribosomal_uS15_B"/>
    <property type="match status" value="1"/>
</dbReference>
<dbReference type="InterPro" id="IPR000589">
    <property type="entry name" value="Ribosomal_uS15"/>
</dbReference>
<dbReference type="InterPro" id="IPR005290">
    <property type="entry name" value="Ribosomal_uS15_bac-type"/>
</dbReference>
<dbReference type="InterPro" id="IPR009068">
    <property type="entry name" value="uS15_NS1_RNA-bd_sf"/>
</dbReference>
<dbReference type="NCBIfam" id="TIGR00952">
    <property type="entry name" value="S15_bact"/>
    <property type="match status" value="1"/>
</dbReference>
<dbReference type="PANTHER" id="PTHR23321">
    <property type="entry name" value="RIBOSOMAL PROTEIN S15, BACTERIAL AND ORGANELLAR"/>
    <property type="match status" value="1"/>
</dbReference>
<dbReference type="PANTHER" id="PTHR23321:SF26">
    <property type="entry name" value="SMALL RIBOSOMAL SUBUNIT PROTEIN US15M"/>
    <property type="match status" value="1"/>
</dbReference>
<dbReference type="Pfam" id="PF00312">
    <property type="entry name" value="Ribosomal_S15"/>
    <property type="match status" value="1"/>
</dbReference>
<dbReference type="SMART" id="SM01387">
    <property type="entry name" value="Ribosomal_S15"/>
    <property type="match status" value="1"/>
</dbReference>
<dbReference type="SUPFAM" id="SSF47060">
    <property type="entry name" value="S15/NS1 RNA-binding domain"/>
    <property type="match status" value="1"/>
</dbReference>
<dbReference type="PROSITE" id="PS00362">
    <property type="entry name" value="RIBOSOMAL_S15"/>
    <property type="match status" value="1"/>
</dbReference>